<comment type="function">
    <text evidence="1">Seems to be required for the assembly of the photosystem I complex.</text>
</comment>
<comment type="subcellular location">
    <subcellularLocation>
        <location evidence="1">Cellular thylakoid membrane</location>
        <topology evidence="1">Multi-pass membrane protein</topology>
    </subcellularLocation>
</comment>
<comment type="similarity">
    <text evidence="3">Belongs to the Ycf4 family.</text>
</comment>
<dbReference type="EMBL" id="BX548175">
    <property type="protein sequence ID" value="CAE21353.1"/>
    <property type="molecule type" value="Genomic_DNA"/>
</dbReference>
<dbReference type="RefSeq" id="WP_011130549.1">
    <property type="nucleotide sequence ID" value="NC_005071.1"/>
</dbReference>
<dbReference type="SMR" id="Q7V6I1"/>
<dbReference type="KEGG" id="pmt:PMT_1178"/>
<dbReference type="eggNOG" id="ENOG502Z7YX">
    <property type="taxonomic scope" value="Bacteria"/>
</dbReference>
<dbReference type="HOGENOM" id="CLU_095465_0_0_3"/>
<dbReference type="OrthoDB" id="7059574at2"/>
<dbReference type="Proteomes" id="UP000001423">
    <property type="component" value="Chromosome"/>
</dbReference>
<dbReference type="GO" id="GO:0009522">
    <property type="term" value="C:photosystem I"/>
    <property type="evidence" value="ECO:0007669"/>
    <property type="project" value="InterPro"/>
</dbReference>
<dbReference type="GO" id="GO:0031676">
    <property type="term" value="C:plasma membrane-derived thylakoid membrane"/>
    <property type="evidence" value="ECO:0007669"/>
    <property type="project" value="UniProtKB-SubCell"/>
</dbReference>
<dbReference type="GO" id="GO:0015979">
    <property type="term" value="P:photosynthesis"/>
    <property type="evidence" value="ECO:0007669"/>
    <property type="project" value="UniProtKB-UniRule"/>
</dbReference>
<dbReference type="HAMAP" id="MF_00437">
    <property type="entry name" value="Ycf4"/>
    <property type="match status" value="1"/>
</dbReference>
<dbReference type="InterPro" id="IPR003359">
    <property type="entry name" value="PSI_Ycf4_assembly"/>
</dbReference>
<dbReference type="NCBIfam" id="NF002712">
    <property type="entry name" value="PRK02542.1"/>
    <property type="match status" value="1"/>
</dbReference>
<dbReference type="Pfam" id="PF02392">
    <property type="entry name" value="Ycf4"/>
    <property type="match status" value="1"/>
</dbReference>
<keyword id="KW-0472">Membrane</keyword>
<keyword id="KW-0602">Photosynthesis</keyword>
<keyword id="KW-1185">Reference proteome</keyword>
<keyword id="KW-0793">Thylakoid</keyword>
<keyword id="KW-0812">Transmembrane</keyword>
<keyword id="KW-1133">Transmembrane helix</keyword>
<gene>
    <name type="primary">ycf4</name>
    <name type="ordered locus">PMT_1178</name>
</gene>
<organism>
    <name type="scientific">Prochlorococcus marinus (strain MIT 9313)</name>
    <dbReference type="NCBI Taxonomy" id="74547"/>
    <lineage>
        <taxon>Bacteria</taxon>
        <taxon>Bacillati</taxon>
        <taxon>Cyanobacteriota</taxon>
        <taxon>Cyanophyceae</taxon>
        <taxon>Synechococcales</taxon>
        <taxon>Prochlorococcaceae</taxon>
        <taxon>Prochlorococcus</taxon>
    </lineage>
</organism>
<sequence length="191" mass="20762">MSADLQETPKAGDASLERLEQSVLGFRRLSNQLLAVIVTIGGLGFTLTCLSSYLGRDLLPIGSPSTLLFVPQGLVMGLYGIAGLLLASYLWAMININLGAGSNNFDKASGMVKICRRGYFKLISAEFPLKDVKAVKVEVRDGFNPLRRLSLRVQGRRDITLTRVGQPLPLAQLEQDGAELARFLDVNLEGL</sequence>
<protein>
    <recommendedName>
        <fullName>Photosystem I assembly protein Ycf4</fullName>
    </recommendedName>
</protein>
<name>YCF4_PROMM</name>
<evidence type="ECO:0000250" key="1"/>
<evidence type="ECO:0000255" key="2"/>
<evidence type="ECO:0000305" key="3"/>
<reference key="1">
    <citation type="journal article" date="2003" name="Nature">
        <title>Genome divergence in two Prochlorococcus ecotypes reflects oceanic niche differentiation.</title>
        <authorList>
            <person name="Rocap G."/>
            <person name="Larimer F.W."/>
            <person name="Lamerdin J.E."/>
            <person name="Malfatti S."/>
            <person name="Chain P."/>
            <person name="Ahlgren N.A."/>
            <person name="Arellano A."/>
            <person name="Coleman M."/>
            <person name="Hauser L."/>
            <person name="Hess W.R."/>
            <person name="Johnson Z.I."/>
            <person name="Land M.L."/>
            <person name="Lindell D."/>
            <person name="Post A.F."/>
            <person name="Regala W."/>
            <person name="Shah M."/>
            <person name="Shaw S.L."/>
            <person name="Steglich C."/>
            <person name="Sullivan M.B."/>
            <person name="Ting C.S."/>
            <person name="Tolonen A."/>
            <person name="Webb E.A."/>
            <person name="Zinser E.R."/>
            <person name="Chisholm S.W."/>
        </authorList>
    </citation>
    <scope>NUCLEOTIDE SEQUENCE [LARGE SCALE GENOMIC DNA]</scope>
    <source>
        <strain>MIT 9313</strain>
    </source>
</reference>
<feature type="chain" id="PRO_0000217635" description="Photosystem I assembly protein Ycf4">
    <location>
        <begin position="1"/>
        <end position="191"/>
    </location>
</feature>
<feature type="transmembrane region" description="Helical" evidence="2">
    <location>
        <begin position="33"/>
        <end position="55"/>
    </location>
</feature>
<feature type="transmembrane region" description="Helical" evidence="2">
    <location>
        <begin position="70"/>
        <end position="92"/>
    </location>
</feature>
<proteinExistence type="inferred from homology"/>
<accession>Q7V6I1</accession>